<comment type="function">
    <text evidence="1">Component of the PAF1 complex (PAF1C) which has multiple functions during transcription by RNA polymerase II and is implicated in regulation of development and maintenance of embryonic stem cell pluripotency. PAF1C associates with RNA polymerase II through interaction with POLR2A CTD non-phosphorylated and 'Ser-2'- and 'Ser-5'-phosphorylated forms and is involved in transcriptional elongation, acting both independently and synergistically with TCEA1 and in cooperation with the DSIF complex and HTATSF1. PAF1C is required for transcription of Hox and Wnt target genes. PAF1C is involved in hematopoiesis and stimulates transcriptional activity of KMT2A/MLL1. PAF1C is involved in histone modifications such as ubiquitination of histone H2B and methylation on histone H3 'Lys-4' (H3K4me3). PAF1C recruits the RNF20/40 E3 ubiquitin-protein ligase complex and the E2 enzyme UBE2A or UBE2B to chromatin which mediate monoubiquitination of 'Lys-120' of histone H2B (H2BK120ub1); UB2A/B-mediated H2B ubiquitination is proposed to be coupled to transcription. PAF1C is involved in mRNA 3' end formation probably through association with cleavage and poly(A) factors. Connects PAF1C with the RNF20/40 E3 ubiquitin-protein ligase complex. Involved in polyadenylation of mRNA precursors (By similarity).</text>
</comment>
<comment type="subunit">
    <text evidence="2 3">Component of the PAF1 complex, which consists of CDC73, PAF1, LEO1, CTR9, RTF1 and SKIC8 (By similarity). The PAF1 complex interacts with PHF5A (By similarity). Interacts with POLR2A, TCEA1, SKIC3, KMT2A/MLL1, SUPT5H, RNF20 and RNF40. Interacts with UBE2E1 (By similarity).</text>
</comment>
<comment type="subcellular location">
    <subcellularLocation>
        <location>Nucleus</location>
    </subcellularLocation>
    <text evidence="1">Punctuate distribution throughout the nucleus except in nucleoli and the perinuclear chromatin.</text>
</comment>
<comment type="similarity">
    <text evidence="6">Belongs to the PAF1 family.</text>
</comment>
<gene>
    <name type="primary">PAF1</name>
</gene>
<feature type="chain" id="PRO_0000326402" description="RNA polymerase II-associated factor 1 homolog">
    <location>
        <begin position="1"/>
        <end position="533"/>
    </location>
</feature>
<feature type="region of interest" description="Disordered" evidence="5">
    <location>
        <begin position="1"/>
        <end position="23"/>
    </location>
</feature>
<feature type="region of interest" description="Disordered" evidence="5">
    <location>
        <begin position="361"/>
        <end position="533"/>
    </location>
</feature>
<feature type="coiled-coil region" evidence="4">
    <location>
        <begin position="352"/>
        <end position="400"/>
    </location>
</feature>
<feature type="compositionally biased region" description="Basic and acidic residues" evidence="5">
    <location>
        <begin position="361"/>
        <end position="374"/>
    </location>
</feature>
<feature type="compositionally biased region" description="Acidic residues" evidence="5">
    <location>
        <begin position="375"/>
        <end position="398"/>
    </location>
</feature>
<feature type="compositionally biased region" description="Basic and acidic residues" evidence="5">
    <location>
        <begin position="399"/>
        <end position="434"/>
    </location>
</feature>
<feature type="compositionally biased region" description="Basic and acidic residues" evidence="5">
    <location>
        <begin position="442"/>
        <end position="453"/>
    </location>
</feature>
<feature type="compositionally biased region" description="Acidic residues" evidence="5">
    <location>
        <begin position="458"/>
        <end position="470"/>
    </location>
</feature>
<feature type="compositionally biased region" description="Low complexity" evidence="5">
    <location>
        <begin position="476"/>
        <end position="485"/>
    </location>
</feature>
<feature type="compositionally biased region" description="Low complexity" evidence="5">
    <location>
        <begin position="500"/>
        <end position="509"/>
    </location>
</feature>
<feature type="modified residue" description="Phosphoserine" evidence="3">
    <location>
        <position position="117"/>
    </location>
</feature>
<feature type="modified residue" description="Phosphoserine" evidence="2">
    <location>
        <position position="456"/>
    </location>
</feature>
<feature type="cross-link" description="Glycyl lysine isopeptide (Lys-Gly) (interchain with G-Cter in SUMO2)" evidence="3">
    <location>
        <position position="133"/>
    </location>
</feature>
<feature type="cross-link" description="Glycyl lysine isopeptide (Lys-Gly) (interchain with G-Cter in SUMO2)" evidence="3">
    <location>
        <position position="154"/>
    </location>
</feature>
<sequence>MAPTIQTQAQREDGHRPNSHRTLPERSGVVCRVKYCNSLPDIPFDPKFITYPFDQNRFVQYKATSLEKQHKHDLLTEPDLGVTIDLINPDTYRIDPNVLLDPADEKLLEEEIQAPTSSKRSQQHAKVVPWMRKTEYISTEFNRYGISNEKPEVKIGVSVKQQFTEEEIYKDRDSQITAIEKTFEDAQKSISQHYSKPRVTPVEVMPVFPDFKMWINPCAQVIFDSDPAPKDTSGAAALEMMSQAMIRGMMDEEGNQFVAYFLPVEETLKKRKRDQEEEMDYAPDDVYDYKIAREYNWNVKNKASKGYEENYFFIFREGDGVYYNELETRVRLSKRRAKAGVQSGTNALLVVKHRDMNEKELEAQEARKAQLENHEPEEEEEEEMETEEKEAGGSDEEQEKGSSSEKEGSEDERSGSESEREEGDRDEASDKSGSGEDESSEDEARAARDKEEIFGSDADSEDDADSDDEDRGQAQGGSDNDSDSGSNGGGQRSRSHSRSRSASPFPSGSEHSAQEDGSEAAAPDSSEADSDSD</sequence>
<organism>
    <name type="scientific">Pongo abelii</name>
    <name type="common">Sumatran orangutan</name>
    <name type="synonym">Pongo pygmaeus abelii</name>
    <dbReference type="NCBI Taxonomy" id="9601"/>
    <lineage>
        <taxon>Eukaryota</taxon>
        <taxon>Metazoa</taxon>
        <taxon>Chordata</taxon>
        <taxon>Craniata</taxon>
        <taxon>Vertebrata</taxon>
        <taxon>Euteleostomi</taxon>
        <taxon>Mammalia</taxon>
        <taxon>Eutheria</taxon>
        <taxon>Euarchontoglires</taxon>
        <taxon>Primates</taxon>
        <taxon>Haplorrhini</taxon>
        <taxon>Catarrhini</taxon>
        <taxon>Hominidae</taxon>
        <taxon>Pongo</taxon>
    </lineage>
</organism>
<name>PAF1_PONAB</name>
<dbReference type="EMBL" id="CR858891">
    <property type="protein sequence ID" value="CAH91090.1"/>
    <property type="molecule type" value="mRNA"/>
</dbReference>
<dbReference type="RefSeq" id="NP_001125634.1">
    <property type="nucleotide sequence ID" value="NM_001132162.2"/>
</dbReference>
<dbReference type="SMR" id="Q5RAX0"/>
<dbReference type="FunCoup" id="Q5RAX0">
    <property type="interactions" value="4530"/>
</dbReference>
<dbReference type="STRING" id="9601.ENSPPYP00000011154"/>
<dbReference type="GeneID" id="100172552"/>
<dbReference type="KEGG" id="pon:100172552"/>
<dbReference type="CTD" id="54623"/>
<dbReference type="eggNOG" id="KOG2478">
    <property type="taxonomic scope" value="Eukaryota"/>
</dbReference>
<dbReference type="InParanoid" id="Q5RAX0"/>
<dbReference type="OrthoDB" id="10260285at2759"/>
<dbReference type="Proteomes" id="UP000001595">
    <property type="component" value="Unplaced"/>
</dbReference>
<dbReference type="GO" id="GO:0016593">
    <property type="term" value="C:Cdc73/Paf1 complex"/>
    <property type="evidence" value="ECO:0000250"/>
    <property type="project" value="UniProtKB"/>
</dbReference>
<dbReference type="GO" id="GO:0003682">
    <property type="term" value="F:chromatin binding"/>
    <property type="evidence" value="ECO:0007669"/>
    <property type="project" value="TreeGrafter"/>
</dbReference>
<dbReference type="GO" id="GO:0000993">
    <property type="term" value="F:RNA polymerase II complex binding"/>
    <property type="evidence" value="ECO:0000250"/>
    <property type="project" value="UniProtKB"/>
</dbReference>
<dbReference type="GO" id="GO:0071222">
    <property type="term" value="P:cellular response to lipopolysaccharide"/>
    <property type="evidence" value="ECO:0000250"/>
    <property type="project" value="UniProtKB"/>
</dbReference>
<dbReference type="GO" id="GO:0001711">
    <property type="term" value="P:endodermal cell fate commitment"/>
    <property type="evidence" value="ECO:0000250"/>
    <property type="project" value="UniProtKB"/>
</dbReference>
<dbReference type="GO" id="GO:0031124">
    <property type="term" value="P:mRNA 3'-end processing"/>
    <property type="evidence" value="ECO:0000250"/>
    <property type="project" value="UniProtKB"/>
</dbReference>
<dbReference type="GO" id="GO:0045638">
    <property type="term" value="P:negative regulation of myeloid cell differentiation"/>
    <property type="evidence" value="ECO:0000250"/>
    <property type="project" value="UniProtKB"/>
</dbReference>
<dbReference type="GO" id="GO:0000122">
    <property type="term" value="P:negative regulation of transcription by RNA polymerase II"/>
    <property type="evidence" value="ECO:0000250"/>
    <property type="project" value="UniProtKB"/>
</dbReference>
<dbReference type="GO" id="GO:1902808">
    <property type="term" value="P:positive regulation of cell cycle G1/S phase transition"/>
    <property type="evidence" value="ECO:0000250"/>
    <property type="project" value="UniProtKB"/>
</dbReference>
<dbReference type="GO" id="GO:0006368">
    <property type="term" value="P:transcription elongation by RNA polymerase II"/>
    <property type="evidence" value="ECO:0000250"/>
    <property type="project" value="UniProtKB"/>
</dbReference>
<dbReference type="GO" id="GO:0016055">
    <property type="term" value="P:Wnt signaling pathway"/>
    <property type="evidence" value="ECO:0007669"/>
    <property type="project" value="UniProtKB-KW"/>
</dbReference>
<dbReference type="InterPro" id="IPR007133">
    <property type="entry name" value="RNA_pol_II-assoc_Paf1"/>
</dbReference>
<dbReference type="PANTHER" id="PTHR23188">
    <property type="entry name" value="RNA POLYMERASE II-ASSOCIATED FACTOR 1 HOMOLOG"/>
    <property type="match status" value="1"/>
</dbReference>
<dbReference type="PANTHER" id="PTHR23188:SF12">
    <property type="entry name" value="RNA POLYMERASE II-ASSOCIATED FACTOR 1 HOMOLOG"/>
    <property type="match status" value="1"/>
</dbReference>
<dbReference type="Pfam" id="PF03985">
    <property type="entry name" value="Paf1"/>
    <property type="match status" value="1"/>
</dbReference>
<accession>Q5RAX0</accession>
<protein>
    <recommendedName>
        <fullName>RNA polymerase II-associated factor 1 homolog</fullName>
    </recommendedName>
</protein>
<keyword id="KW-0175">Coiled coil</keyword>
<keyword id="KW-1017">Isopeptide bond</keyword>
<keyword id="KW-0539">Nucleus</keyword>
<keyword id="KW-0597">Phosphoprotein</keyword>
<keyword id="KW-1185">Reference proteome</keyword>
<keyword id="KW-0804">Transcription</keyword>
<keyword id="KW-0805">Transcription regulation</keyword>
<keyword id="KW-0832">Ubl conjugation</keyword>
<keyword id="KW-0879">Wnt signaling pathway</keyword>
<proteinExistence type="evidence at transcript level"/>
<reference key="1">
    <citation type="submission" date="2004-11" db="EMBL/GenBank/DDBJ databases">
        <authorList>
            <consortium name="The German cDNA consortium"/>
        </authorList>
    </citation>
    <scope>NUCLEOTIDE SEQUENCE [LARGE SCALE MRNA]</scope>
    <source>
        <tissue>Kidney</tissue>
    </source>
</reference>
<evidence type="ECO:0000250" key="1"/>
<evidence type="ECO:0000250" key="2">
    <source>
        <dbReference type="UniProtKB" id="Q8K2T8"/>
    </source>
</evidence>
<evidence type="ECO:0000250" key="3">
    <source>
        <dbReference type="UniProtKB" id="Q8N7H5"/>
    </source>
</evidence>
<evidence type="ECO:0000255" key="4"/>
<evidence type="ECO:0000256" key="5">
    <source>
        <dbReference type="SAM" id="MobiDB-lite"/>
    </source>
</evidence>
<evidence type="ECO:0000305" key="6"/>